<dbReference type="EMBL" id="M22156">
    <property type="protein sequence ID" value="AAA49102.1"/>
    <property type="molecule type" value="mRNA"/>
</dbReference>
<dbReference type="EMBL" id="M22158">
    <property type="protein sequence ID" value="AAA49103.1"/>
    <property type="molecule type" value="mRNA"/>
</dbReference>
<dbReference type="EMBL" id="M22155">
    <property type="protein sequence ID" value="AAA49101.1"/>
    <property type="molecule type" value="mRNA"/>
</dbReference>
<dbReference type="EMBL" id="M22154">
    <property type="protein sequence ID" value="AAA49100.1"/>
    <property type="molecule type" value="mRNA"/>
</dbReference>
<dbReference type="PIR" id="A31957">
    <property type="entry name" value="A31957"/>
</dbReference>
<dbReference type="PIR" id="B31957">
    <property type="entry name" value="B31957"/>
</dbReference>
<dbReference type="PIR" id="C31957">
    <property type="entry name" value="C31957"/>
</dbReference>
<dbReference type="PIR" id="D31957">
    <property type="entry name" value="D31957"/>
</dbReference>
<dbReference type="RefSeq" id="XP_015142056.1">
    <molecule id="P12620-1"/>
    <property type="nucleotide sequence ID" value="XM_015286570.4"/>
</dbReference>
<dbReference type="RefSeq" id="XP_015142059.1">
    <molecule id="P12620-3"/>
    <property type="nucleotide sequence ID" value="XM_015286573.3"/>
</dbReference>
<dbReference type="RefSeq" id="XP_015142062.1">
    <molecule id="P12620-4"/>
    <property type="nucleotide sequence ID" value="XM_015286576.3"/>
</dbReference>
<dbReference type="RefSeq" id="XP_046773802.1">
    <molecule id="P12620-1"/>
    <property type="nucleotide sequence ID" value="XM_046917846.1"/>
</dbReference>
<dbReference type="RefSeq" id="XP_046773806.1">
    <molecule id="P12620-3"/>
    <property type="nucleotide sequence ID" value="XM_046917850.1"/>
</dbReference>
<dbReference type="RefSeq" id="XP_046773808.1">
    <molecule id="P12620-4"/>
    <property type="nucleotide sequence ID" value="XM_046917852.1"/>
</dbReference>
<dbReference type="PDB" id="1YTZ">
    <property type="method" value="X-ray"/>
    <property type="resolution" value="3.00 A"/>
    <property type="chains" value="T=157-263"/>
</dbReference>
<dbReference type="PDB" id="1YV0">
    <property type="method" value="X-ray"/>
    <property type="resolution" value="7.00 A"/>
    <property type="chains" value="T=157-263"/>
</dbReference>
<dbReference type="PDB" id="2W49">
    <property type="method" value="EM"/>
    <property type="resolution" value="35.00 A"/>
    <property type="chains" value="1/4/7/Y=160-249"/>
</dbReference>
<dbReference type="PDB" id="2W4U">
    <property type="method" value="EM"/>
    <property type="resolution" value="35.00 A"/>
    <property type="chains" value="1/4/7/Y=160-249"/>
</dbReference>
<dbReference type="PDB" id="2Z5H">
    <property type="method" value="X-ray"/>
    <property type="resolution" value="2.89 A"/>
    <property type="chains" value="T=58-112"/>
</dbReference>
<dbReference type="PDBsum" id="1YTZ"/>
<dbReference type="PDBsum" id="1YV0"/>
<dbReference type="PDBsum" id="2W49"/>
<dbReference type="PDBsum" id="2W4U"/>
<dbReference type="PDBsum" id="2Z5H"/>
<dbReference type="SMR" id="P12620"/>
<dbReference type="FunCoup" id="P12620">
    <property type="interactions" value="2"/>
</dbReference>
<dbReference type="IntAct" id="P12620">
    <property type="interactions" value="2"/>
</dbReference>
<dbReference type="MINT" id="P12620"/>
<dbReference type="STRING" id="9031.ENSGALP00000063676"/>
<dbReference type="PaxDb" id="9031-ENSGALP00000010605"/>
<dbReference type="GeneID" id="395761"/>
<dbReference type="CTD" id="7140"/>
<dbReference type="VEuPathDB" id="HostDB:geneid_395761"/>
<dbReference type="eggNOG" id="KOG3634">
    <property type="taxonomic scope" value="Eukaryota"/>
</dbReference>
<dbReference type="HOGENOM" id="CLU_076377_2_0_1"/>
<dbReference type="InParanoid" id="P12620"/>
<dbReference type="OrthoDB" id="330499at2759"/>
<dbReference type="EvolutionaryTrace" id="P12620"/>
<dbReference type="PRO" id="PR:P12620"/>
<dbReference type="Proteomes" id="UP000000539">
    <property type="component" value="Unassembled WGS sequence"/>
</dbReference>
<dbReference type="GO" id="GO:0005861">
    <property type="term" value="C:troponin complex"/>
    <property type="evidence" value="ECO:0000318"/>
    <property type="project" value="GO_Central"/>
</dbReference>
<dbReference type="GO" id="GO:0005523">
    <property type="term" value="F:tropomyosin binding"/>
    <property type="evidence" value="ECO:0000318"/>
    <property type="project" value="GO_Central"/>
</dbReference>
<dbReference type="GO" id="GO:0030172">
    <property type="term" value="F:troponin C binding"/>
    <property type="evidence" value="ECO:0000318"/>
    <property type="project" value="GO_Central"/>
</dbReference>
<dbReference type="GO" id="GO:0031013">
    <property type="term" value="F:troponin I binding"/>
    <property type="evidence" value="ECO:0000318"/>
    <property type="project" value="GO_Central"/>
</dbReference>
<dbReference type="GO" id="GO:0006937">
    <property type="term" value="P:regulation of muscle contraction"/>
    <property type="evidence" value="ECO:0007669"/>
    <property type="project" value="InterPro"/>
</dbReference>
<dbReference type="GO" id="GO:0003009">
    <property type="term" value="P:skeletal muscle contraction"/>
    <property type="evidence" value="ECO:0000318"/>
    <property type="project" value="GO_Central"/>
</dbReference>
<dbReference type="FunFam" id="1.20.5.350:FF:000001">
    <property type="entry name" value="Troponin T, fast skeletal muscle"/>
    <property type="match status" value="1"/>
</dbReference>
<dbReference type="Gene3D" id="1.20.5.350">
    <property type="match status" value="1"/>
</dbReference>
<dbReference type="InterPro" id="IPR027707">
    <property type="entry name" value="TNNT"/>
</dbReference>
<dbReference type="InterPro" id="IPR001978">
    <property type="entry name" value="Troponin"/>
</dbReference>
<dbReference type="InterPro" id="IPR038077">
    <property type="entry name" value="Troponin_sf"/>
</dbReference>
<dbReference type="PANTHER" id="PTHR11521">
    <property type="entry name" value="TROPONIN T"/>
    <property type="match status" value="1"/>
</dbReference>
<dbReference type="PANTHER" id="PTHR11521:SF4">
    <property type="entry name" value="TROPONIN T, FAST SKELETAL MUSCLE"/>
    <property type="match status" value="1"/>
</dbReference>
<dbReference type="Pfam" id="PF00992">
    <property type="entry name" value="Troponin"/>
    <property type="match status" value="1"/>
</dbReference>
<dbReference type="SUPFAM" id="SSF90250">
    <property type="entry name" value="Troponin coil-coiled subunits"/>
    <property type="match status" value="1"/>
</dbReference>
<name>TNNT3_CHICK</name>
<gene>
    <name type="primary">TNNT3</name>
</gene>
<evidence type="ECO:0000250" key="1"/>
<evidence type="ECO:0000256" key="2">
    <source>
        <dbReference type="SAM" id="MobiDB-lite"/>
    </source>
</evidence>
<evidence type="ECO:0000269" key="3">
    <source>
    </source>
</evidence>
<evidence type="ECO:0000303" key="4">
    <source>
    </source>
</evidence>
<evidence type="ECO:0000305" key="5"/>
<evidence type="ECO:0007829" key="6">
    <source>
        <dbReference type="PDB" id="1YTZ"/>
    </source>
</evidence>
<evidence type="ECO:0007829" key="7">
    <source>
        <dbReference type="PDB" id="2Z5H"/>
    </source>
</evidence>
<organism>
    <name type="scientific">Gallus gallus</name>
    <name type="common">Chicken</name>
    <dbReference type="NCBI Taxonomy" id="9031"/>
    <lineage>
        <taxon>Eukaryota</taxon>
        <taxon>Metazoa</taxon>
        <taxon>Chordata</taxon>
        <taxon>Craniata</taxon>
        <taxon>Vertebrata</taxon>
        <taxon>Euteleostomi</taxon>
        <taxon>Archelosauria</taxon>
        <taxon>Archosauria</taxon>
        <taxon>Dinosauria</taxon>
        <taxon>Saurischia</taxon>
        <taxon>Theropoda</taxon>
        <taxon>Coelurosauria</taxon>
        <taxon>Aves</taxon>
        <taxon>Neognathae</taxon>
        <taxon>Galloanserae</taxon>
        <taxon>Galliformes</taxon>
        <taxon>Phasianidae</taxon>
        <taxon>Phasianinae</taxon>
        <taxon>Gallus</taxon>
    </lineage>
</organism>
<comment type="function">
    <text evidence="3">Troponin T is the tropomyosin-binding subunit of troponin, the thin filament regulatory complex which confers calcium-sensitivity to striated muscle actomyosin ATPase activity.</text>
</comment>
<comment type="alternative products">
    <event type="alternative splicing"/>
    <isoform>
        <id>P12620-1</id>
        <name>TNT-3</name>
        <sequence type="displayed"/>
    </isoform>
    <isoform>
        <id>P12620-2</id>
        <name>TNT-1</name>
        <sequence type="described" ref="VSP_006633"/>
    </isoform>
    <isoform>
        <id>P12620-3</id>
        <name>TNT-2</name>
        <sequence type="described" ref="VSP_006634 VSP_006636"/>
    </isoform>
    <isoform>
        <id>P12620-4</id>
        <name>TNT-4</name>
        <sequence type="described" ref="VSP_006634 VSP_006635"/>
    </isoform>
    <text>Additional isoforms seem to exist.</text>
</comment>
<comment type="similarity">
    <text evidence="5">Belongs to the troponin T family.</text>
</comment>
<protein>
    <recommendedName>
        <fullName>Troponin T, fast skeletal muscle isoforms</fullName>
    </recommendedName>
</protein>
<accession>P12620</accession>
<accession>P12618</accession>
<accession>P12619</accession>
<accession>P12621</accession>
<keyword id="KW-0002">3D-structure</keyword>
<keyword id="KW-0007">Acetylation</keyword>
<keyword id="KW-0025">Alternative splicing</keyword>
<keyword id="KW-0514">Muscle protein</keyword>
<keyword id="KW-0597">Phosphoprotein</keyword>
<keyword id="KW-1185">Reference proteome</keyword>
<reference key="1">
    <citation type="journal article" date="1988" name="J. Biol. Chem.">
        <title>Sequences of complete cDNAs encoding four variants of chicken skeletal muscle troponin T.</title>
        <authorList>
            <person name="Smillie L.B."/>
            <person name="Golosinska K."/>
            <person name="Reinach F.C."/>
        </authorList>
    </citation>
    <scope>NUCLEOTIDE SEQUENCE [MRNA] (ISOFORMS TNT-1; TNT-2; TNT-3 AND TNT-4)</scope>
</reference>
<reference key="2">
    <citation type="journal article" date="2005" name="Proc. Natl. Acad. Sci. U.S.A.">
        <title>Ca(2+)-regulated structural changes in troponin.</title>
        <authorList>
            <person name="Vinogradova M.V."/>
            <person name="Stone D.B."/>
            <person name="Malanina G.G."/>
            <person name="Karatzaferi C."/>
            <person name="Cooke R."/>
            <person name="Mendelson R.A."/>
            <person name="Fletterick R.J."/>
        </authorList>
    </citation>
    <scope>X-RAY CRYSTALLOGRAPHY (2.89 ANGSTROMS) OF 58-112</scope>
    <scope>X-RAY CRYSTALLOGRAPHY (3.0 ANGSTROMS) OF 157-262</scope>
    <scope>FUNCTION</scope>
</reference>
<sequence length="263" mass="31142">MSDTEEVEHGEEEYEEEAHEAEEVHEEEVHEPAPPPEEAPEEEEKPRIKLTAPKIPEGEKVDFDDIQKKRQNKDLIELQALIDSHFEARRKEEEELVALKERIEKRRAERAEQQRIRAEKEKERQARLAEEKARREEEDAKRKAEDDLKKKKALSSMGASYSSYLAKADQKRGKKQTARETKKKVLAERRKPLNIDHLNEDKLRDKAKELWDWLYQLQTEKYDFAEQIKRKKYEIVTLRNRIDQAQKHSKKAGAKGKVGGRWK</sequence>
<feature type="initiator methionine" description="Removed">
    <location>
        <position position="1"/>
    </location>
</feature>
<feature type="chain" id="PRO_0000186183" description="Troponin T, fast skeletal muscle isoforms">
    <location>
        <begin position="2"/>
        <end position="263"/>
    </location>
</feature>
<feature type="region of interest" description="Disordered" evidence="2">
    <location>
        <begin position="1"/>
        <end position="66"/>
    </location>
</feature>
<feature type="region of interest" description="Disordered" evidence="2">
    <location>
        <begin position="107"/>
        <end position="188"/>
    </location>
</feature>
<feature type="region of interest" description="Disordered" evidence="2">
    <location>
        <begin position="243"/>
        <end position="263"/>
    </location>
</feature>
<feature type="compositionally biased region" description="Acidic residues" evidence="2">
    <location>
        <begin position="1"/>
        <end position="26"/>
    </location>
</feature>
<feature type="compositionally biased region" description="Basic and acidic residues" evidence="2">
    <location>
        <begin position="56"/>
        <end position="66"/>
    </location>
</feature>
<feature type="compositionally biased region" description="Basic and acidic residues" evidence="2">
    <location>
        <begin position="107"/>
        <end position="149"/>
    </location>
</feature>
<feature type="compositionally biased region" description="Basic and acidic residues" evidence="2">
    <location>
        <begin position="177"/>
        <end position="188"/>
    </location>
</feature>
<feature type="compositionally biased region" description="Basic residues" evidence="2">
    <location>
        <begin position="247"/>
        <end position="263"/>
    </location>
</feature>
<feature type="modified residue" description="N-acetylserine" evidence="1">
    <location>
        <position position="2"/>
    </location>
</feature>
<feature type="splice variant" id="VSP_006633" description="In isoform TNT-1." evidence="4">
    <original>EEYEEEAHEAEEVHEEEVHEPAPP</original>
    <variation>AHEAEEVHEEAHHEEAHHAEAHHEEAHAHAEEVHE</variation>
    <location>
        <begin position="12"/>
        <end position="35"/>
    </location>
</feature>
<feature type="splice variant" id="VSP_006634" description="In isoform TNT-2 and isoform TNT-4." evidence="4">
    <location>
        <begin position="12"/>
        <end position="17"/>
    </location>
</feature>
<feature type="splice variant" id="VSP_006635" description="In isoform TNT-4." evidence="4">
    <location>
        <begin position="39"/>
        <end position="44"/>
    </location>
</feature>
<feature type="splice variant" id="VSP_006636" description="In isoform TNT-2." evidence="4">
    <original>VTLRNRIDQAQKH</original>
    <variation>LTLRCRLQELSKF</variation>
    <location>
        <begin position="236"/>
        <end position="248"/>
    </location>
</feature>
<feature type="turn" evidence="7">
    <location>
        <begin position="70"/>
        <end position="73"/>
    </location>
</feature>
<feature type="helix" evidence="7">
    <location>
        <begin position="74"/>
        <end position="77"/>
    </location>
</feature>
<feature type="turn" evidence="7">
    <location>
        <begin position="78"/>
        <end position="84"/>
    </location>
</feature>
<feature type="strand" evidence="7">
    <location>
        <begin position="85"/>
        <end position="91"/>
    </location>
</feature>
<feature type="turn" evidence="7">
    <location>
        <begin position="92"/>
        <end position="94"/>
    </location>
</feature>
<feature type="turn" evidence="7">
    <location>
        <begin position="96"/>
        <end position="98"/>
    </location>
</feature>
<feature type="helix" evidence="6">
    <location>
        <begin position="164"/>
        <end position="188"/>
    </location>
</feature>
<feature type="strand" evidence="6">
    <location>
        <begin position="196"/>
        <end position="198"/>
    </location>
</feature>
<feature type="helix" evidence="6">
    <location>
        <begin position="202"/>
        <end position="244"/>
    </location>
</feature>
<proteinExistence type="evidence at protein level"/>